<feature type="chain" id="PRO_0000319667" description="Phosphoribosyl-ATP pyrophosphatase">
    <location>
        <begin position="1"/>
        <end position="104"/>
    </location>
</feature>
<organism>
    <name type="scientific">Streptococcus sanguinis (strain SK36)</name>
    <dbReference type="NCBI Taxonomy" id="388919"/>
    <lineage>
        <taxon>Bacteria</taxon>
        <taxon>Bacillati</taxon>
        <taxon>Bacillota</taxon>
        <taxon>Bacilli</taxon>
        <taxon>Lactobacillales</taxon>
        <taxon>Streptococcaceae</taxon>
        <taxon>Streptococcus</taxon>
    </lineage>
</organism>
<evidence type="ECO:0000255" key="1">
    <source>
        <dbReference type="HAMAP-Rule" id="MF_01020"/>
    </source>
</evidence>
<keyword id="KW-0028">Amino-acid biosynthesis</keyword>
<keyword id="KW-0067">ATP-binding</keyword>
<keyword id="KW-0963">Cytoplasm</keyword>
<keyword id="KW-0368">Histidine biosynthesis</keyword>
<keyword id="KW-0378">Hydrolase</keyword>
<keyword id="KW-0547">Nucleotide-binding</keyword>
<keyword id="KW-1185">Reference proteome</keyword>
<name>HIS2_STRSV</name>
<gene>
    <name evidence="1" type="primary">hisE</name>
    <name type="ordered locus">SSA_1440</name>
</gene>
<accession>A3CNS8</accession>
<reference key="1">
    <citation type="journal article" date="2007" name="J. Bacteriol.">
        <title>Genome of the opportunistic pathogen Streptococcus sanguinis.</title>
        <authorList>
            <person name="Xu P."/>
            <person name="Alves J.M."/>
            <person name="Kitten T."/>
            <person name="Brown A."/>
            <person name="Chen Z."/>
            <person name="Ozaki L.S."/>
            <person name="Manque P."/>
            <person name="Ge X."/>
            <person name="Serrano M.G."/>
            <person name="Puiu D."/>
            <person name="Hendricks S."/>
            <person name="Wang Y."/>
            <person name="Chaplin M.D."/>
            <person name="Akan D."/>
            <person name="Paik S."/>
            <person name="Peterson D.L."/>
            <person name="Macrina F.L."/>
            <person name="Buck G.A."/>
        </authorList>
    </citation>
    <scope>NUCLEOTIDE SEQUENCE [LARGE SCALE GENOMIC DNA]</scope>
    <source>
        <strain>SK36</strain>
    </source>
</reference>
<proteinExistence type="inferred from homology"/>
<dbReference type="EC" id="3.6.1.31" evidence="1"/>
<dbReference type="EMBL" id="CP000387">
    <property type="protein sequence ID" value="ABN44833.1"/>
    <property type="molecule type" value="Genomic_DNA"/>
</dbReference>
<dbReference type="RefSeq" id="WP_011837137.1">
    <property type="nucleotide sequence ID" value="NC_009009.1"/>
</dbReference>
<dbReference type="RefSeq" id="YP_001035383.1">
    <property type="nucleotide sequence ID" value="NC_009009.1"/>
</dbReference>
<dbReference type="SMR" id="A3CNS8"/>
<dbReference type="STRING" id="388919.SSA_1440"/>
<dbReference type="KEGG" id="ssa:SSA_1440"/>
<dbReference type="PATRIC" id="fig|388919.9.peg.1365"/>
<dbReference type="eggNOG" id="COG0140">
    <property type="taxonomic scope" value="Bacteria"/>
</dbReference>
<dbReference type="HOGENOM" id="CLU_123337_0_0_9"/>
<dbReference type="OrthoDB" id="9795769at2"/>
<dbReference type="UniPathway" id="UPA00031">
    <property type="reaction ID" value="UER00007"/>
</dbReference>
<dbReference type="Proteomes" id="UP000002148">
    <property type="component" value="Chromosome"/>
</dbReference>
<dbReference type="GO" id="GO:0005737">
    <property type="term" value="C:cytoplasm"/>
    <property type="evidence" value="ECO:0007669"/>
    <property type="project" value="UniProtKB-SubCell"/>
</dbReference>
<dbReference type="GO" id="GO:0005524">
    <property type="term" value="F:ATP binding"/>
    <property type="evidence" value="ECO:0007669"/>
    <property type="project" value="UniProtKB-KW"/>
</dbReference>
<dbReference type="GO" id="GO:0004636">
    <property type="term" value="F:phosphoribosyl-ATP diphosphatase activity"/>
    <property type="evidence" value="ECO:0007669"/>
    <property type="project" value="UniProtKB-UniRule"/>
</dbReference>
<dbReference type="GO" id="GO:0000105">
    <property type="term" value="P:L-histidine biosynthetic process"/>
    <property type="evidence" value="ECO:0007669"/>
    <property type="project" value="UniProtKB-UniRule"/>
</dbReference>
<dbReference type="CDD" id="cd11534">
    <property type="entry name" value="NTP-PPase_HisIE_like"/>
    <property type="match status" value="1"/>
</dbReference>
<dbReference type="Gene3D" id="1.10.287.1080">
    <property type="entry name" value="MazG-like"/>
    <property type="match status" value="1"/>
</dbReference>
<dbReference type="HAMAP" id="MF_01020">
    <property type="entry name" value="HisE"/>
    <property type="match status" value="1"/>
</dbReference>
<dbReference type="InterPro" id="IPR008179">
    <property type="entry name" value="HisE"/>
</dbReference>
<dbReference type="InterPro" id="IPR021130">
    <property type="entry name" value="PRib-ATP_PPHydrolase-like"/>
</dbReference>
<dbReference type="NCBIfam" id="TIGR03188">
    <property type="entry name" value="histidine_hisI"/>
    <property type="match status" value="1"/>
</dbReference>
<dbReference type="PANTHER" id="PTHR42945">
    <property type="entry name" value="HISTIDINE BIOSYNTHESIS BIFUNCTIONAL PROTEIN"/>
    <property type="match status" value="1"/>
</dbReference>
<dbReference type="PANTHER" id="PTHR42945:SF9">
    <property type="entry name" value="HISTIDINE BIOSYNTHESIS BIFUNCTIONAL PROTEIN HISIE"/>
    <property type="match status" value="1"/>
</dbReference>
<dbReference type="Pfam" id="PF01503">
    <property type="entry name" value="PRA-PH"/>
    <property type="match status" value="1"/>
</dbReference>
<dbReference type="SUPFAM" id="SSF101386">
    <property type="entry name" value="all-alpha NTP pyrophosphatases"/>
    <property type="match status" value="1"/>
</dbReference>
<protein>
    <recommendedName>
        <fullName evidence="1">Phosphoribosyl-ATP pyrophosphatase</fullName>
        <shortName evidence="1">PRA-PH</shortName>
        <ecNumber evidence="1">3.6.1.31</ecNumber>
    </recommendedName>
</protein>
<sequence length="104" mass="11807">MLETLYQEALKRKKEPKEGSYTSYLYDKGLDKILKKVGEEATEVVIAAKNADKNEMANETADLLYHLAVALVETGVSLEEVETVLQARQGKQSRIHDRPEIDHY</sequence>
<comment type="catalytic activity">
    <reaction evidence="1">
        <text>1-(5-phospho-beta-D-ribosyl)-ATP + H2O = 1-(5-phospho-beta-D-ribosyl)-5'-AMP + diphosphate + H(+)</text>
        <dbReference type="Rhea" id="RHEA:22828"/>
        <dbReference type="ChEBI" id="CHEBI:15377"/>
        <dbReference type="ChEBI" id="CHEBI:15378"/>
        <dbReference type="ChEBI" id="CHEBI:33019"/>
        <dbReference type="ChEBI" id="CHEBI:59457"/>
        <dbReference type="ChEBI" id="CHEBI:73183"/>
        <dbReference type="EC" id="3.6.1.31"/>
    </reaction>
</comment>
<comment type="pathway">
    <text evidence="1">Amino-acid biosynthesis; L-histidine biosynthesis; L-histidine from 5-phospho-alpha-D-ribose 1-diphosphate: step 2/9.</text>
</comment>
<comment type="subcellular location">
    <subcellularLocation>
        <location evidence="1">Cytoplasm</location>
    </subcellularLocation>
</comment>
<comment type="similarity">
    <text evidence="1">Belongs to the PRA-PH family.</text>
</comment>